<name>RL22_BRAHW</name>
<accession>C0QW01</accession>
<sequence>MDYKVKVRYLRIGRRKVARLLPFVKGEYVNHAISNLATMPQMSSVVLRKAIKSGIANAIFQSRNINPDTLWVKTAFVDKAPTLKRIRAASRGSADPILKRLSHITIILSDDKKPEKKKLKAKSAKTEEAPKAAEV</sequence>
<gene>
    <name evidence="1" type="primary">rplV</name>
    <name type="ordered locus">BHWA1_02129</name>
</gene>
<reference key="1">
    <citation type="journal article" date="2009" name="PLoS ONE">
        <title>Genome sequence of the pathogenic intestinal spirochete Brachyspira hyodysenteriae reveals adaptations to its lifestyle in the porcine large intestine.</title>
        <authorList>
            <person name="Bellgard M.I."/>
            <person name="Wanchanthuek P."/>
            <person name="La T."/>
            <person name="Ryan K."/>
            <person name="Moolhuijzen P."/>
            <person name="Albertyn Z."/>
            <person name="Shaban B."/>
            <person name="Motro Y."/>
            <person name="Dunn D.S."/>
            <person name="Schibeci D."/>
            <person name="Hunter A."/>
            <person name="Barrero R."/>
            <person name="Phillips N.D."/>
            <person name="Hampson D.J."/>
        </authorList>
    </citation>
    <scope>NUCLEOTIDE SEQUENCE [LARGE SCALE GENOMIC DNA]</scope>
    <source>
        <strain>ATCC 49526 / WA1</strain>
    </source>
</reference>
<comment type="function">
    <text evidence="1">This protein binds specifically to 23S rRNA; its binding is stimulated by other ribosomal proteins, e.g. L4, L17, and L20. It is important during the early stages of 50S assembly. It makes multiple contacts with different domains of the 23S rRNA in the assembled 50S subunit and ribosome (By similarity).</text>
</comment>
<comment type="function">
    <text evidence="1">The globular domain of the protein is located near the polypeptide exit tunnel on the outside of the subunit, while an extended beta-hairpin is found that lines the wall of the exit tunnel in the center of the 70S ribosome.</text>
</comment>
<comment type="subunit">
    <text evidence="1">Part of the 50S ribosomal subunit.</text>
</comment>
<comment type="similarity">
    <text evidence="1">Belongs to the universal ribosomal protein uL22 family.</text>
</comment>
<keyword id="KW-0687">Ribonucleoprotein</keyword>
<keyword id="KW-0689">Ribosomal protein</keyword>
<keyword id="KW-0694">RNA-binding</keyword>
<keyword id="KW-0699">rRNA-binding</keyword>
<proteinExistence type="inferred from homology"/>
<feature type="chain" id="PRO_1000214596" description="Large ribosomal subunit protein uL22">
    <location>
        <begin position="1"/>
        <end position="135"/>
    </location>
</feature>
<feature type="region of interest" description="Disordered" evidence="2">
    <location>
        <begin position="112"/>
        <end position="135"/>
    </location>
</feature>
<feature type="compositionally biased region" description="Basic and acidic residues" evidence="2">
    <location>
        <begin position="124"/>
        <end position="135"/>
    </location>
</feature>
<dbReference type="EMBL" id="CP001357">
    <property type="protein sequence ID" value="ACN84587.1"/>
    <property type="molecule type" value="Genomic_DNA"/>
</dbReference>
<dbReference type="RefSeq" id="WP_012671623.1">
    <property type="nucleotide sequence ID" value="NC_012225.1"/>
</dbReference>
<dbReference type="SMR" id="C0QW01"/>
<dbReference type="STRING" id="565034.BHWA1_02129"/>
<dbReference type="GeneID" id="63963281"/>
<dbReference type="KEGG" id="bhy:BHWA1_02129"/>
<dbReference type="eggNOG" id="COG0091">
    <property type="taxonomic scope" value="Bacteria"/>
</dbReference>
<dbReference type="HOGENOM" id="CLU_083987_3_2_12"/>
<dbReference type="Proteomes" id="UP000001803">
    <property type="component" value="Chromosome"/>
</dbReference>
<dbReference type="GO" id="GO:0022625">
    <property type="term" value="C:cytosolic large ribosomal subunit"/>
    <property type="evidence" value="ECO:0007669"/>
    <property type="project" value="TreeGrafter"/>
</dbReference>
<dbReference type="GO" id="GO:0019843">
    <property type="term" value="F:rRNA binding"/>
    <property type="evidence" value="ECO:0007669"/>
    <property type="project" value="UniProtKB-UniRule"/>
</dbReference>
<dbReference type="GO" id="GO:0003735">
    <property type="term" value="F:structural constituent of ribosome"/>
    <property type="evidence" value="ECO:0007669"/>
    <property type="project" value="InterPro"/>
</dbReference>
<dbReference type="GO" id="GO:0006412">
    <property type="term" value="P:translation"/>
    <property type="evidence" value="ECO:0007669"/>
    <property type="project" value="UniProtKB-UniRule"/>
</dbReference>
<dbReference type="Gene3D" id="3.90.470.10">
    <property type="entry name" value="Ribosomal protein L22/L17"/>
    <property type="match status" value="1"/>
</dbReference>
<dbReference type="HAMAP" id="MF_01331_B">
    <property type="entry name" value="Ribosomal_uL22_B"/>
    <property type="match status" value="1"/>
</dbReference>
<dbReference type="InterPro" id="IPR001063">
    <property type="entry name" value="Ribosomal_uL22"/>
</dbReference>
<dbReference type="InterPro" id="IPR005727">
    <property type="entry name" value="Ribosomal_uL22_bac/chlpt-type"/>
</dbReference>
<dbReference type="InterPro" id="IPR047867">
    <property type="entry name" value="Ribosomal_uL22_bac/org-type"/>
</dbReference>
<dbReference type="InterPro" id="IPR036394">
    <property type="entry name" value="Ribosomal_uL22_sf"/>
</dbReference>
<dbReference type="NCBIfam" id="TIGR01044">
    <property type="entry name" value="rplV_bact"/>
    <property type="match status" value="1"/>
</dbReference>
<dbReference type="PANTHER" id="PTHR13501">
    <property type="entry name" value="CHLOROPLAST 50S RIBOSOMAL PROTEIN L22-RELATED"/>
    <property type="match status" value="1"/>
</dbReference>
<dbReference type="PANTHER" id="PTHR13501:SF8">
    <property type="entry name" value="LARGE RIBOSOMAL SUBUNIT PROTEIN UL22M"/>
    <property type="match status" value="1"/>
</dbReference>
<dbReference type="Pfam" id="PF00237">
    <property type="entry name" value="Ribosomal_L22"/>
    <property type="match status" value="1"/>
</dbReference>
<dbReference type="SUPFAM" id="SSF54843">
    <property type="entry name" value="Ribosomal protein L22"/>
    <property type="match status" value="1"/>
</dbReference>
<organism>
    <name type="scientific">Brachyspira hyodysenteriae (strain ATCC 49526 / WA1)</name>
    <dbReference type="NCBI Taxonomy" id="565034"/>
    <lineage>
        <taxon>Bacteria</taxon>
        <taxon>Pseudomonadati</taxon>
        <taxon>Spirochaetota</taxon>
        <taxon>Spirochaetia</taxon>
        <taxon>Brachyspirales</taxon>
        <taxon>Brachyspiraceae</taxon>
        <taxon>Brachyspira</taxon>
    </lineage>
</organism>
<evidence type="ECO:0000255" key="1">
    <source>
        <dbReference type="HAMAP-Rule" id="MF_01331"/>
    </source>
</evidence>
<evidence type="ECO:0000256" key="2">
    <source>
        <dbReference type="SAM" id="MobiDB-lite"/>
    </source>
</evidence>
<evidence type="ECO:0000305" key="3"/>
<protein>
    <recommendedName>
        <fullName evidence="1">Large ribosomal subunit protein uL22</fullName>
    </recommendedName>
    <alternativeName>
        <fullName evidence="3">50S ribosomal protein L22</fullName>
    </alternativeName>
</protein>